<evidence type="ECO:0000250" key="1">
    <source>
        <dbReference type="UniProtKB" id="O64411"/>
    </source>
</evidence>
<evidence type="ECO:0000255" key="2"/>
<evidence type="ECO:0000269" key="3">
    <source>
    </source>
</evidence>
<evidence type="ECO:0000269" key="4">
    <source>
    </source>
</evidence>
<evidence type="ECO:0000269" key="5">
    <source>
    </source>
</evidence>
<evidence type="ECO:0000269" key="6">
    <source>
    </source>
</evidence>
<evidence type="ECO:0000269" key="7">
    <source>
    </source>
</evidence>
<evidence type="ECO:0000303" key="8">
    <source>
    </source>
</evidence>
<evidence type="ECO:0000305" key="9"/>
<evidence type="ECO:0000305" key="10">
    <source>
    </source>
</evidence>
<evidence type="ECO:0000305" key="11">
    <source>
    </source>
</evidence>
<evidence type="ECO:0000312" key="12">
    <source>
        <dbReference type="Araport" id="AT1G65840"/>
    </source>
</evidence>
<evidence type="ECO:0000312" key="13">
    <source>
        <dbReference type="EMBL" id="AAF23834.1"/>
    </source>
</evidence>
<evidence type="ECO:0000312" key="14">
    <source>
        <dbReference type="EMBL" id="AAO85405.1"/>
    </source>
</evidence>
<gene>
    <name type="primary">PAO4</name>
    <name evidence="12" type="ordered locus">At1g65840</name>
    <name evidence="13" type="ORF">F1E22.18</name>
</gene>
<comment type="function">
    <text evidence="4 5 6 7 11">Flavoenzyme involved in polyamine back-conversion (PubMed:18703589, PubMed:20532512, PubMed:21081665, PubMed:26925084). Catalyzes the oxidation of the secondary amino group of polyamines, such as spermine and spermidine (PubMed:18703589, PubMed:20532512, PubMed:21081665, PubMed:26925084). Substrate preference is spermine &gt; spermidine (PubMed:18703589, PubMed:21081665). No activity detected when putrescine or N(1)-acetylspermine are used as substrates (PubMed:18703589). Plays an important role in the regulation of polyamine intracellular concentration (Probable).</text>
</comment>
<comment type="catalytic activity">
    <reaction evidence="4">
        <text>spermine + O2 + H2O = 3-aminopropanal + spermidine + H2O2</text>
        <dbReference type="Rhea" id="RHEA:25804"/>
        <dbReference type="ChEBI" id="CHEBI:15377"/>
        <dbReference type="ChEBI" id="CHEBI:15379"/>
        <dbReference type="ChEBI" id="CHEBI:16240"/>
        <dbReference type="ChEBI" id="CHEBI:45725"/>
        <dbReference type="ChEBI" id="CHEBI:57834"/>
        <dbReference type="ChEBI" id="CHEBI:58374"/>
        <dbReference type="EC" id="1.5.3.16"/>
    </reaction>
</comment>
<comment type="catalytic activity">
    <reaction evidence="4">
        <text>spermidine + O2 + H2O = 3-aminopropanal + putrescine + H2O2</text>
        <dbReference type="Rhea" id="RHEA:25808"/>
        <dbReference type="ChEBI" id="CHEBI:15377"/>
        <dbReference type="ChEBI" id="CHEBI:15379"/>
        <dbReference type="ChEBI" id="CHEBI:16240"/>
        <dbReference type="ChEBI" id="CHEBI:57834"/>
        <dbReference type="ChEBI" id="CHEBI:58374"/>
        <dbReference type="ChEBI" id="CHEBI:326268"/>
    </reaction>
</comment>
<comment type="cofactor">
    <cofactor evidence="4">
        <name>FAD</name>
        <dbReference type="ChEBI" id="CHEBI:57692"/>
    </cofactor>
    <text evidence="10">Binds 1 FAD per subunit.</text>
</comment>
<comment type="biophysicochemical properties">
    <kinetics>
        <KM evidence="4">0.23 mM for spermine</KM>
        <KM evidence="6">0.047 mM for spermine</KM>
        <KM evidence="6">0.137 mM for spermidine</KM>
    </kinetics>
    <phDependence>
        <text evidence="4">Optimum pH is 7.5-8.5.</text>
    </phDependence>
</comment>
<comment type="pathway">
    <text evidence="9">Amine and polyamine degradation; spermine degradation.</text>
</comment>
<comment type="pathway">
    <text evidence="9">Amine and polyamine degradation; spermidine degradation.</text>
</comment>
<comment type="subcellular location">
    <subcellularLocation>
        <location evidence="4">Peroxisome</location>
    </subcellularLocation>
</comment>
<comment type="tissue specificity">
    <text evidence="4">Highly expressed in roots, flowers and greening cotelydons. Lower expression in other tissues.</text>
</comment>
<comment type="induction">
    <text evidence="3">By abscisic acid, salicylic acid, wounding and flagellin 22, a pathogen elicitor.</text>
</comment>
<comment type="disruption phenotype">
    <text evidence="4">No visible phenotype under normal growth conditions.</text>
</comment>
<comment type="similarity">
    <text evidence="9">Belongs to the flavin monoamine oxidase family.</text>
</comment>
<comment type="sequence caution" evidence="9">
    <conflict type="erroneous gene model prediction">
        <sequence resource="EMBL-CDS" id="AAF23834"/>
    </conflict>
</comment>
<reference key="1">
    <citation type="submission" date="2001-03" db="EMBL/GenBank/DDBJ databases">
        <title>A putative amine oxidase 2 from Arabidopsis.</title>
        <authorList>
            <person name="Pinontoan R."/>
            <person name="Cunningham K.W."/>
            <person name="Iida H."/>
            <person name="Uozumi N."/>
            <person name="Muto S."/>
        </authorList>
    </citation>
    <scope>NUCLEOTIDE SEQUENCE [MRNA]</scope>
    <source>
        <strain>cv. Landsberg erecta</strain>
    </source>
</reference>
<reference key="2">
    <citation type="journal article" date="2000" name="Nature">
        <title>Sequence and analysis of chromosome 1 of the plant Arabidopsis thaliana.</title>
        <authorList>
            <person name="Theologis A."/>
            <person name="Ecker J.R."/>
            <person name="Palm C.J."/>
            <person name="Federspiel N.A."/>
            <person name="Kaul S."/>
            <person name="White O."/>
            <person name="Alonso J."/>
            <person name="Altafi H."/>
            <person name="Araujo R."/>
            <person name="Bowman C.L."/>
            <person name="Brooks S.Y."/>
            <person name="Buehler E."/>
            <person name="Chan A."/>
            <person name="Chao Q."/>
            <person name="Chen H."/>
            <person name="Cheuk R.F."/>
            <person name="Chin C.W."/>
            <person name="Chung M.K."/>
            <person name="Conn L."/>
            <person name="Conway A.B."/>
            <person name="Conway A.R."/>
            <person name="Creasy T.H."/>
            <person name="Dewar K."/>
            <person name="Dunn P."/>
            <person name="Etgu P."/>
            <person name="Feldblyum T.V."/>
            <person name="Feng J.-D."/>
            <person name="Fong B."/>
            <person name="Fujii C.Y."/>
            <person name="Gill J.E."/>
            <person name="Goldsmith A.D."/>
            <person name="Haas B."/>
            <person name="Hansen N.F."/>
            <person name="Hughes B."/>
            <person name="Huizar L."/>
            <person name="Hunter J.L."/>
            <person name="Jenkins J."/>
            <person name="Johnson-Hopson C."/>
            <person name="Khan S."/>
            <person name="Khaykin E."/>
            <person name="Kim C.J."/>
            <person name="Koo H.L."/>
            <person name="Kremenetskaia I."/>
            <person name="Kurtz D.B."/>
            <person name="Kwan A."/>
            <person name="Lam B."/>
            <person name="Langin-Hooper S."/>
            <person name="Lee A."/>
            <person name="Lee J.M."/>
            <person name="Lenz C.A."/>
            <person name="Li J.H."/>
            <person name="Li Y.-P."/>
            <person name="Lin X."/>
            <person name="Liu S.X."/>
            <person name="Liu Z.A."/>
            <person name="Luros J.S."/>
            <person name="Maiti R."/>
            <person name="Marziali A."/>
            <person name="Militscher J."/>
            <person name="Miranda M."/>
            <person name="Nguyen M."/>
            <person name="Nierman W.C."/>
            <person name="Osborne B.I."/>
            <person name="Pai G."/>
            <person name="Peterson J."/>
            <person name="Pham P.K."/>
            <person name="Rizzo M."/>
            <person name="Rooney T."/>
            <person name="Rowley D."/>
            <person name="Sakano H."/>
            <person name="Salzberg S.L."/>
            <person name="Schwartz J.R."/>
            <person name="Shinn P."/>
            <person name="Southwick A.M."/>
            <person name="Sun H."/>
            <person name="Tallon L.J."/>
            <person name="Tambunga G."/>
            <person name="Toriumi M.J."/>
            <person name="Town C.D."/>
            <person name="Utterback T."/>
            <person name="Van Aken S."/>
            <person name="Vaysberg M."/>
            <person name="Vysotskaia V.S."/>
            <person name="Walker M."/>
            <person name="Wu D."/>
            <person name="Yu G."/>
            <person name="Fraser C.M."/>
            <person name="Venter J.C."/>
            <person name="Davis R.W."/>
        </authorList>
    </citation>
    <scope>NUCLEOTIDE SEQUENCE [LARGE SCALE GENOMIC DNA]</scope>
    <source>
        <strain>cv. Columbia</strain>
    </source>
</reference>
<reference key="3">
    <citation type="journal article" date="2017" name="Plant J.">
        <title>Araport11: a complete reannotation of the Arabidopsis thaliana reference genome.</title>
        <authorList>
            <person name="Cheng C.Y."/>
            <person name="Krishnakumar V."/>
            <person name="Chan A.P."/>
            <person name="Thibaud-Nissen F."/>
            <person name="Schobel S."/>
            <person name="Town C.D."/>
        </authorList>
    </citation>
    <scope>GENOME REANNOTATION</scope>
    <source>
        <strain>cv. Columbia</strain>
    </source>
</reference>
<reference key="4">
    <citation type="journal article" date="2003" name="Science">
        <title>Empirical analysis of transcriptional activity in the Arabidopsis genome.</title>
        <authorList>
            <person name="Yamada K."/>
            <person name="Lim J."/>
            <person name="Dale J.M."/>
            <person name="Chen H."/>
            <person name="Shinn P."/>
            <person name="Palm C.J."/>
            <person name="Southwick A.M."/>
            <person name="Wu H.C."/>
            <person name="Kim C.J."/>
            <person name="Nguyen M."/>
            <person name="Pham P.K."/>
            <person name="Cheuk R.F."/>
            <person name="Karlin-Newmann G."/>
            <person name="Liu S.X."/>
            <person name="Lam B."/>
            <person name="Sakano H."/>
            <person name="Wu T."/>
            <person name="Yu G."/>
            <person name="Miranda M."/>
            <person name="Quach H.L."/>
            <person name="Tripp M."/>
            <person name="Chang C.H."/>
            <person name="Lee J.M."/>
            <person name="Toriumi M.J."/>
            <person name="Chan M.M."/>
            <person name="Tang C.C."/>
            <person name="Onodera C.S."/>
            <person name="Deng J.M."/>
            <person name="Akiyama K."/>
            <person name="Ansari Y."/>
            <person name="Arakawa T."/>
            <person name="Banh J."/>
            <person name="Banno F."/>
            <person name="Bowser L."/>
            <person name="Brooks S.Y."/>
            <person name="Carninci P."/>
            <person name="Chao Q."/>
            <person name="Choy N."/>
            <person name="Enju A."/>
            <person name="Goldsmith A.D."/>
            <person name="Gurjal M."/>
            <person name="Hansen N.F."/>
            <person name="Hayashizaki Y."/>
            <person name="Johnson-Hopson C."/>
            <person name="Hsuan V.W."/>
            <person name="Iida K."/>
            <person name="Karnes M."/>
            <person name="Khan S."/>
            <person name="Koesema E."/>
            <person name="Ishida J."/>
            <person name="Jiang P.X."/>
            <person name="Jones T."/>
            <person name="Kawai J."/>
            <person name="Kamiya A."/>
            <person name="Meyers C."/>
            <person name="Nakajima M."/>
            <person name="Narusaka M."/>
            <person name="Seki M."/>
            <person name="Sakurai T."/>
            <person name="Satou M."/>
            <person name="Tamse R."/>
            <person name="Vaysberg M."/>
            <person name="Wallender E.K."/>
            <person name="Wong C."/>
            <person name="Yamamura Y."/>
            <person name="Yuan S."/>
            <person name="Shinozaki K."/>
            <person name="Davis R.W."/>
            <person name="Theologis A."/>
            <person name="Ecker J.R."/>
        </authorList>
    </citation>
    <scope>NUCLEOTIDE SEQUENCE [LARGE SCALE MRNA]</scope>
    <source>
        <strain>cv. Columbia</strain>
    </source>
</reference>
<reference key="5">
    <citation type="journal article" date="2006" name="Plant Physiol.">
        <title>Heterologous expression and biochemical characterization of a polyamine oxidase from Arabidopsis involved in polyamine back conversion.</title>
        <authorList>
            <person name="Tavladoraki P."/>
            <person name="Rossi M.N."/>
            <person name="Saccuti G."/>
            <person name="Perez-Amador M.A."/>
            <person name="Polticelli F."/>
            <person name="Angelini R."/>
            <person name="Federico R."/>
        </authorList>
    </citation>
    <scope>IDENTIFICATION</scope>
</reference>
<reference key="6">
    <citation type="journal article" date="2008" name="Plant Cell Physiol.">
        <title>A putative peroxisomal polyamine oxidase, AtPAO4, is involved in polyamine catabolism in Arabidopsis thaliana.</title>
        <authorList>
            <person name="Kamada-Nobusada T."/>
            <person name="Hayashi M."/>
            <person name="Fukazawa M."/>
            <person name="Sakakibara H."/>
            <person name="Nishimura M."/>
        </authorList>
    </citation>
    <scope>FUNCTION</scope>
    <scope>CATALYTIC ACTIVITY</scope>
    <scope>SUBCELLULAR LOCATION</scope>
    <scope>TISSUE SPECIFICITY</scope>
    <scope>BIOPHYSICOCHEMICAL PROPERTIES</scope>
    <scope>DISRUPTION PHENOTYPE</scope>
</reference>
<reference key="7">
    <citation type="journal article" date="2008" name="Plant Physiol.">
        <title>Bridging the gap between plant and mammalian polyamine catabolism: a novel peroxisomal polyamine oxidase responsible for a full back-conversion pathway in Arabidopsis thaliana.</title>
        <authorList>
            <person name="Moschou P.N."/>
            <person name="Sanmartin M."/>
            <person name="Andriopoulou A.H."/>
            <person name="Rojo E."/>
            <person name="Sanchez-Serrano J.J."/>
            <person name="Roubelakis-Angelakis K.A."/>
        </authorList>
    </citation>
    <scope>INDUCTION</scope>
</reference>
<reference key="8">
    <citation type="journal article" date="2010" name="Plant Cell Rep.">
        <title>Characterization of five polyamine oxidase isoforms in Arabidopsis thaliana.</title>
        <authorList>
            <person name="Takahashi Y."/>
            <person name="Cong R."/>
            <person name="Sagor G.H."/>
            <person name="Niitsu M."/>
            <person name="Berberich T."/>
            <person name="Kusano T."/>
        </authorList>
    </citation>
    <scope>FUNCTION</scope>
</reference>
<reference key="9">
    <citation type="journal article" date="2011" name="J. Exp. Bot.">
        <title>Functional diversity inside the Arabidopsis polyamine oxidase gene family.</title>
        <authorList>
            <person name="Fincato P."/>
            <person name="Moschou P.N."/>
            <person name="Spedaletti V."/>
            <person name="Tavazza R."/>
            <person name="Angelini R."/>
            <person name="Federico R."/>
            <person name="Roubelakis-Angelakis K.A."/>
            <person name="Tavladoraki P."/>
        </authorList>
    </citation>
    <scope>FUNCTION</scope>
    <scope>BIOPHYSICOCHEMICAL PROPERTIES</scope>
</reference>
<reference key="10">
    <citation type="journal article" date="2016" name="Front. Plant Sci.">
        <title>Global metabolic profiling of Arabidopsis polyamine oxidase 4 (AtPAO4) loss-of-function mutants exhibiting delayed dark-induced senescence.</title>
        <authorList>
            <person name="Sequera-Mutiozabal M.I."/>
            <person name="Erban A."/>
            <person name="Kopka J."/>
            <person name="Atanasov K.E."/>
            <person name="Bastida J."/>
            <person name="Fotopoulos V."/>
            <person name="Alcazar R."/>
            <person name="Tiburcio A.F."/>
        </authorList>
    </citation>
    <scope>FUNCTION</scope>
</reference>
<proteinExistence type="evidence at protein level"/>
<dbReference type="EC" id="1.5.3.16" evidence="4"/>
<dbReference type="EMBL" id="AF364953">
    <property type="protein sequence ID" value="AAO85405.1"/>
    <property type="molecule type" value="mRNA"/>
</dbReference>
<dbReference type="EMBL" id="AC007234">
    <property type="protein sequence ID" value="AAF23834.1"/>
    <property type="status" value="ALT_SEQ"/>
    <property type="molecule type" value="Genomic_DNA"/>
</dbReference>
<dbReference type="EMBL" id="CP002684">
    <property type="protein sequence ID" value="AEE34430.1"/>
    <property type="molecule type" value="Genomic_DNA"/>
</dbReference>
<dbReference type="EMBL" id="AF370508">
    <property type="protein sequence ID" value="AAK43885.1"/>
    <property type="molecule type" value="mRNA"/>
</dbReference>
<dbReference type="EMBL" id="BT000353">
    <property type="protein sequence ID" value="AAN15672.1"/>
    <property type="molecule type" value="mRNA"/>
</dbReference>
<dbReference type="PIR" id="D96682">
    <property type="entry name" value="D96682"/>
</dbReference>
<dbReference type="RefSeq" id="NP_176759.1">
    <property type="nucleotide sequence ID" value="NM_105256.4"/>
</dbReference>
<dbReference type="SMR" id="Q8H191"/>
<dbReference type="FunCoup" id="Q8H191">
    <property type="interactions" value="19"/>
</dbReference>
<dbReference type="STRING" id="3702.Q8H191"/>
<dbReference type="PaxDb" id="3702-AT1G65840.1"/>
<dbReference type="ProteomicsDB" id="248658"/>
<dbReference type="EnsemblPlants" id="AT1G65840.1">
    <property type="protein sequence ID" value="AT1G65840.1"/>
    <property type="gene ID" value="AT1G65840"/>
</dbReference>
<dbReference type="GeneID" id="842894"/>
<dbReference type="Gramene" id="AT1G65840.1">
    <property type="protein sequence ID" value="AT1G65840.1"/>
    <property type="gene ID" value="AT1G65840"/>
</dbReference>
<dbReference type="KEGG" id="ath:AT1G65840"/>
<dbReference type="Araport" id="AT1G65840"/>
<dbReference type="TAIR" id="AT1G65840">
    <property type="gene designation" value="PAO4"/>
</dbReference>
<dbReference type="eggNOG" id="KOG0029">
    <property type="taxonomic scope" value="Eukaryota"/>
</dbReference>
<dbReference type="HOGENOM" id="CLU_004498_10_0_1"/>
<dbReference type="InParanoid" id="Q8H191"/>
<dbReference type="OMA" id="CWDQDEC"/>
<dbReference type="OrthoDB" id="5046242at2759"/>
<dbReference type="PhylomeDB" id="Q8H191"/>
<dbReference type="BioCyc" id="ARA:AT1G65840-MONOMER"/>
<dbReference type="BioCyc" id="MetaCyc:AT1G65840-MONOMER"/>
<dbReference type="BRENDA" id="1.5.3.16">
    <property type="organism ID" value="399"/>
</dbReference>
<dbReference type="UniPathway" id="UPA00211"/>
<dbReference type="UniPathway" id="UPA00250"/>
<dbReference type="PRO" id="PR:Q8H191"/>
<dbReference type="Proteomes" id="UP000006548">
    <property type="component" value="Chromosome 1"/>
</dbReference>
<dbReference type="ExpressionAtlas" id="Q8H191">
    <property type="expression patterns" value="baseline and differential"/>
</dbReference>
<dbReference type="GO" id="GO:0005777">
    <property type="term" value="C:peroxisome"/>
    <property type="evidence" value="ECO:0000314"/>
    <property type="project" value="TAIR"/>
</dbReference>
<dbReference type="GO" id="GO:0046592">
    <property type="term" value="F:polyamine oxidase activity"/>
    <property type="evidence" value="ECO:0000314"/>
    <property type="project" value="TAIR"/>
</dbReference>
<dbReference type="GO" id="GO:0052901">
    <property type="term" value="F:spermine oxidase activity"/>
    <property type="evidence" value="ECO:0007669"/>
    <property type="project" value="UniProtKB-EC"/>
</dbReference>
<dbReference type="GO" id="GO:0006598">
    <property type="term" value="P:polyamine catabolic process"/>
    <property type="evidence" value="ECO:0000314"/>
    <property type="project" value="TAIR"/>
</dbReference>
<dbReference type="GO" id="GO:0046203">
    <property type="term" value="P:spermidine catabolic process"/>
    <property type="evidence" value="ECO:0007669"/>
    <property type="project" value="UniProtKB-UniPathway"/>
</dbReference>
<dbReference type="GO" id="GO:0046208">
    <property type="term" value="P:spermine catabolic process"/>
    <property type="evidence" value="ECO:0007669"/>
    <property type="project" value="UniProtKB-UniPathway"/>
</dbReference>
<dbReference type="Gene3D" id="3.90.660.10">
    <property type="match status" value="1"/>
</dbReference>
<dbReference type="Gene3D" id="3.50.50.60">
    <property type="entry name" value="FAD/NAD(P)-binding domain"/>
    <property type="match status" value="1"/>
</dbReference>
<dbReference type="InterPro" id="IPR002937">
    <property type="entry name" value="Amino_oxidase"/>
</dbReference>
<dbReference type="InterPro" id="IPR036188">
    <property type="entry name" value="FAD/NAD-bd_sf"/>
</dbReference>
<dbReference type="InterPro" id="IPR001613">
    <property type="entry name" value="Flavin_amine_oxidase"/>
</dbReference>
<dbReference type="InterPro" id="IPR050281">
    <property type="entry name" value="Flavin_monoamine_oxidase"/>
</dbReference>
<dbReference type="PANTHER" id="PTHR10742">
    <property type="entry name" value="FLAVIN MONOAMINE OXIDASE"/>
    <property type="match status" value="1"/>
</dbReference>
<dbReference type="PANTHER" id="PTHR10742:SF228">
    <property type="entry name" value="POLYAMINE OXIDASE 4-RELATED"/>
    <property type="match status" value="1"/>
</dbReference>
<dbReference type="Pfam" id="PF01593">
    <property type="entry name" value="Amino_oxidase"/>
    <property type="match status" value="1"/>
</dbReference>
<dbReference type="PRINTS" id="PR00757">
    <property type="entry name" value="AMINEOXDASEF"/>
</dbReference>
<dbReference type="SUPFAM" id="SSF54373">
    <property type="entry name" value="FAD-linked reductases, C-terminal domain"/>
    <property type="match status" value="1"/>
</dbReference>
<dbReference type="SUPFAM" id="SSF51905">
    <property type="entry name" value="FAD/NAD(P)-binding domain"/>
    <property type="match status" value="1"/>
</dbReference>
<organism>
    <name type="scientific">Arabidopsis thaliana</name>
    <name type="common">Mouse-ear cress</name>
    <dbReference type="NCBI Taxonomy" id="3702"/>
    <lineage>
        <taxon>Eukaryota</taxon>
        <taxon>Viridiplantae</taxon>
        <taxon>Streptophyta</taxon>
        <taxon>Embryophyta</taxon>
        <taxon>Tracheophyta</taxon>
        <taxon>Spermatophyta</taxon>
        <taxon>Magnoliopsida</taxon>
        <taxon>eudicotyledons</taxon>
        <taxon>Gunneridae</taxon>
        <taxon>Pentapetalae</taxon>
        <taxon>rosids</taxon>
        <taxon>malvids</taxon>
        <taxon>Brassicales</taxon>
        <taxon>Brassicaceae</taxon>
        <taxon>Camelineae</taxon>
        <taxon>Arabidopsis</taxon>
    </lineage>
</organism>
<accession>Q8H191</accession>
<accession>Q94JZ7</accession>
<accession>Q9SHX4</accession>
<feature type="chain" id="PRO_0000352510" description="Probable polyamine oxidase 4">
    <location>
        <begin position="1"/>
        <end position="497"/>
    </location>
</feature>
<feature type="short sequence motif" description="Microbody targeting signal" evidence="2">
    <location>
        <begin position="495"/>
        <end position="497"/>
    </location>
</feature>
<feature type="binding site" evidence="1">
    <location>
        <position position="58"/>
    </location>
    <ligand>
        <name>FAD</name>
        <dbReference type="ChEBI" id="CHEBI:57692"/>
    </ligand>
</feature>
<feature type="binding site" evidence="1">
    <location>
        <position position="66"/>
    </location>
    <ligand>
        <name>FAD</name>
        <dbReference type="ChEBI" id="CHEBI:57692"/>
    </ligand>
</feature>
<feature type="binding site" evidence="1">
    <location>
        <position position="247"/>
    </location>
    <ligand>
        <name>FAD</name>
        <dbReference type="ChEBI" id="CHEBI:57692"/>
    </ligand>
</feature>
<feature type="binding site" evidence="1">
    <location>
        <position position="435"/>
    </location>
    <ligand>
        <name>FAD</name>
        <dbReference type="ChEBI" id="CHEBI:57692"/>
    </ligand>
</feature>
<feature type="sequence conflict" description="In Ref. 4; AAK43885." evidence="9" ref="4">
    <original>K</original>
    <variation>R</variation>
    <location>
        <position position="283"/>
    </location>
</feature>
<sequence>MDKKKNSFPDNLPEGTISELMQKQNNVQPSVIVIGSGISGLAAARNLSEASFKVTVLESRDRIGGRIHTDYSFGCPVDMGASWLHGVSDENPLAPIIRRLGLTLYRTSGDDSILYDHDLESYGLFDMHGNKIPPQLVTKVGDAFKRILEETEKIRDETANDMSVLQGISIVLDRNPELRQEGMAYEVLQWYLCRMEAWFAVDANLISLKCWDQDECLSGGHGLMVQGYEPVIRTIAKDLDIRLNHRVTKVVRTSNNKVIVAVEGGTNFVADAVIITVPIGVLKANLIQFEPELPQWKTSAISGLGVGNENKIALRFDRAFWPNVEFLGMVAPTSYACGYFLNLHKATGHPVLVYMAAGNLAQDLEKLSDEATANFVMLQLKKMFPDAPDPAQYLVTRWGTDPNTLGCYAYDVVGMPEDLYPRLGEPVDNIFFGGEAVNVEHQGSAHGAFLAGVSASQNCQRYIFERLGAWEKLKLVSLMGNSDILETATVPLQISRM</sequence>
<name>PAO4_ARATH</name>
<keyword id="KW-0274">FAD</keyword>
<keyword id="KW-0285">Flavoprotein</keyword>
<keyword id="KW-0560">Oxidoreductase</keyword>
<keyword id="KW-0576">Peroxisome</keyword>
<keyword id="KW-1185">Reference proteome</keyword>
<protein>
    <recommendedName>
        <fullName evidence="8">Probable polyamine oxidase 4</fullName>
        <shortName evidence="8">AtPAO4</shortName>
        <ecNumber evidence="4">1.5.3.16</ecNumber>
    </recommendedName>
    <alternativeName>
        <fullName evidence="14">Amine oxidase 2</fullName>
    </alternativeName>
</protein>